<keyword id="KW-0002">3D-structure</keyword>
<keyword id="KW-0143">Chaperone</keyword>
<keyword id="KW-0574">Periplasm</keyword>
<keyword id="KW-0653">Protein transport</keyword>
<keyword id="KW-0732">Signal</keyword>
<keyword id="KW-0813">Transport</keyword>
<protein>
    <recommendedName>
        <fullName evidence="1">Outer-membrane lipoprotein carrier protein</fullName>
    </recommendedName>
</protein>
<name>LOLA_VIBC3</name>
<comment type="function">
    <text evidence="1">Participates in the translocation of lipoproteins from the inner membrane to the outer membrane. Only forms a complex with a lipoprotein if the residue after the N-terminal Cys is not an aspartate (The Asp acts as a targeting signal to indicate that the lipoprotein should stay in the inner membrane).</text>
</comment>
<comment type="subunit">
    <text evidence="1">Monomer.</text>
</comment>
<comment type="subcellular location">
    <subcellularLocation>
        <location evidence="1">Periplasm</location>
    </subcellularLocation>
</comment>
<comment type="similarity">
    <text evidence="1">Belongs to the LolA family.</text>
</comment>
<evidence type="ECO:0000255" key="1">
    <source>
        <dbReference type="HAMAP-Rule" id="MF_00240"/>
    </source>
</evidence>
<feature type="signal peptide" evidence="1">
    <location>
        <begin position="1"/>
        <end position="16"/>
    </location>
</feature>
<feature type="chain" id="PRO_1000071833" description="Outer-membrane lipoprotein carrier protein">
    <location>
        <begin position="17"/>
        <end position="198"/>
    </location>
</feature>
<gene>
    <name evidence="1" type="primary">lolA</name>
    <name type="ordered locus">VC0395_A0626</name>
    <name type="ordered locus">VC395_1122</name>
</gene>
<dbReference type="EMBL" id="CP000627">
    <property type="protein sequence ID" value="ABQ21754.1"/>
    <property type="molecule type" value="Genomic_DNA"/>
</dbReference>
<dbReference type="EMBL" id="CP001235">
    <property type="protein sequence ID" value="ACP09132.1"/>
    <property type="molecule type" value="Genomic_DNA"/>
</dbReference>
<dbReference type="RefSeq" id="WP_001045827.1">
    <property type="nucleotide sequence ID" value="NZ_JAACZH010000005.1"/>
</dbReference>
<dbReference type="PDB" id="8CHX">
    <property type="method" value="X-ray"/>
    <property type="resolution" value="1.80 A"/>
    <property type="chains" value="A/B=17-198"/>
</dbReference>
<dbReference type="PDBsum" id="8CHX"/>
<dbReference type="SMR" id="A5F2G9"/>
<dbReference type="GeneID" id="88785458"/>
<dbReference type="KEGG" id="vco:VC0395_A0626"/>
<dbReference type="KEGG" id="vcr:VC395_1122"/>
<dbReference type="PATRIC" id="fig|345073.21.peg.1090"/>
<dbReference type="eggNOG" id="COG2834">
    <property type="taxonomic scope" value="Bacteria"/>
</dbReference>
<dbReference type="HOGENOM" id="CLU_087560_1_1_6"/>
<dbReference type="OrthoDB" id="9787361at2"/>
<dbReference type="Proteomes" id="UP000000249">
    <property type="component" value="Chromosome 2"/>
</dbReference>
<dbReference type="GO" id="GO:0030288">
    <property type="term" value="C:outer membrane-bounded periplasmic space"/>
    <property type="evidence" value="ECO:0007669"/>
    <property type="project" value="TreeGrafter"/>
</dbReference>
<dbReference type="GO" id="GO:0044874">
    <property type="term" value="P:lipoprotein localization to outer membrane"/>
    <property type="evidence" value="ECO:0007669"/>
    <property type="project" value="UniProtKB-UniRule"/>
</dbReference>
<dbReference type="GO" id="GO:0042953">
    <property type="term" value="P:lipoprotein transport"/>
    <property type="evidence" value="ECO:0007669"/>
    <property type="project" value="InterPro"/>
</dbReference>
<dbReference type="CDD" id="cd16325">
    <property type="entry name" value="LolA"/>
    <property type="match status" value="1"/>
</dbReference>
<dbReference type="Gene3D" id="2.50.20.10">
    <property type="entry name" value="Lipoprotein localisation LolA/LolB/LppX"/>
    <property type="match status" value="1"/>
</dbReference>
<dbReference type="HAMAP" id="MF_00240">
    <property type="entry name" value="LolA"/>
    <property type="match status" value="1"/>
</dbReference>
<dbReference type="InterPro" id="IPR029046">
    <property type="entry name" value="LolA/LolB/LppX"/>
</dbReference>
<dbReference type="InterPro" id="IPR004564">
    <property type="entry name" value="OM_lipoprot_carrier_LolA-like"/>
</dbReference>
<dbReference type="InterPro" id="IPR018323">
    <property type="entry name" value="OM_lipoprot_carrier_LolA_Pbac"/>
</dbReference>
<dbReference type="NCBIfam" id="TIGR00547">
    <property type="entry name" value="lolA"/>
    <property type="match status" value="1"/>
</dbReference>
<dbReference type="PANTHER" id="PTHR35869">
    <property type="entry name" value="OUTER-MEMBRANE LIPOPROTEIN CARRIER PROTEIN"/>
    <property type="match status" value="1"/>
</dbReference>
<dbReference type="PANTHER" id="PTHR35869:SF1">
    <property type="entry name" value="OUTER-MEMBRANE LIPOPROTEIN CARRIER PROTEIN"/>
    <property type="match status" value="1"/>
</dbReference>
<dbReference type="Pfam" id="PF03548">
    <property type="entry name" value="LolA"/>
    <property type="match status" value="1"/>
</dbReference>
<dbReference type="SUPFAM" id="SSF89392">
    <property type="entry name" value="Prokaryotic lipoproteins and lipoprotein localization factors"/>
    <property type="match status" value="1"/>
</dbReference>
<accession>A5F2G9</accession>
<accession>C3LZB6</accession>
<sequence length="198" mass="22301">MNKWLALLFCSFSAIAAPKDTLSERLAMSEGFSATFNQQVLSPEGKVILTGNGKVDIARPSLFRWETETPDENLLVSDGTTLWHFDPFVEQVTLYRAEEALEQTPFVLLTRNKASDWDAYHVEEKGDVFTLTPTALDSNQGRFQITISEKGVVQGFKVIEQDGQQSEFTFSKVKQQKPNASVFNYKVPKGVEVDDQRN</sequence>
<reference key="1">
    <citation type="submission" date="2007-03" db="EMBL/GenBank/DDBJ databases">
        <authorList>
            <person name="Heidelberg J."/>
        </authorList>
    </citation>
    <scope>NUCLEOTIDE SEQUENCE [LARGE SCALE GENOMIC DNA]</scope>
    <source>
        <strain>ATCC 39541 / Classical Ogawa 395 / O395</strain>
    </source>
</reference>
<reference key="2">
    <citation type="journal article" date="2008" name="PLoS ONE">
        <title>A recalibrated molecular clock and independent origins for the cholera pandemic clones.</title>
        <authorList>
            <person name="Feng L."/>
            <person name="Reeves P.R."/>
            <person name="Lan R."/>
            <person name="Ren Y."/>
            <person name="Gao C."/>
            <person name="Zhou Z."/>
            <person name="Ren Y."/>
            <person name="Cheng J."/>
            <person name="Wang W."/>
            <person name="Wang J."/>
            <person name="Qian W."/>
            <person name="Li D."/>
            <person name="Wang L."/>
        </authorList>
    </citation>
    <scope>NUCLEOTIDE SEQUENCE [LARGE SCALE GENOMIC DNA]</scope>
    <source>
        <strain>ATCC 39541 / Classical Ogawa 395 / O395</strain>
    </source>
</reference>
<proteinExistence type="evidence at protein level"/>
<organism>
    <name type="scientific">Vibrio cholerae serotype O1 (strain ATCC 39541 / Classical Ogawa 395 / O395)</name>
    <dbReference type="NCBI Taxonomy" id="345073"/>
    <lineage>
        <taxon>Bacteria</taxon>
        <taxon>Pseudomonadati</taxon>
        <taxon>Pseudomonadota</taxon>
        <taxon>Gammaproteobacteria</taxon>
        <taxon>Vibrionales</taxon>
        <taxon>Vibrionaceae</taxon>
        <taxon>Vibrio</taxon>
    </lineage>
</organism>